<evidence type="ECO:0000255" key="1">
    <source>
        <dbReference type="HAMAP-Rule" id="MF_00693"/>
    </source>
</evidence>
<dbReference type="EMBL" id="CP000746">
    <property type="protein sequence ID" value="ABR75154.1"/>
    <property type="molecule type" value="Genomic_DNA"/>
</dbReference>
<dbReference type="RefSeq" id="WP_012073531.1">
    <property type="nucleotide sequence ID" value="NC_009655.1"/>
</dbReference>
<dbReference type="SMR" id="A6VQA7"/>
<dbReference type="STRING" id="339671.Asuc_1803"/>
<dbReference type="KEGG" id="asu:Asuc_1803"/>
<dbReference type="eggNOG" id="COG0217">
    <property type="taxonomic scope" value="Bacteria"/>
</dbReference>
<dbReference type="HOGENOM" id="CLU_062974_2_2_6"/>
<dbReference type="OrthoDB" id="9781053at2"/>
<dbReference type="Proteomes" id="UP000001114">
    <property type="component" value="Chromosome"/>
</dbReference>
<dbReference type="GO" id="GO:0005829">
    <property type="term" value="C:cytosol"/>
    <property type="evidence" value="ECO:0007669"/>
    <property type="project" value="TreeGrafter"/>
</dbReference>
<dbReference type="GO" id="GO:0003677">
    <property type="term" value="F:DNA binding"/>
    <property type="evidence" value="ECO:0007669"/>
    <property type="project" value="UniProtKB-UniRule"/>
</dbReference>
<dbReference type="GO" id="GO:0006355">
    <property type="term" value="P:regulation of DNA-templated transcription"/>
    <property type="evidence" value="ECO:0007669"/>
    <property type="project" value="UniProtKB-UniRule"/>
</dbReference>
<dbReference type="FunFam" id="1.10.10.200:FF:000001">
    <property type="entry name" value="Probable transcriptional regulatory protein YebC"/>
    <property type="match status" value="1"/>
</dbReference>
<dbReference type="FunFam" id="3.30.70.980:FF:000002">
    <property type="entry name" value="Probable transcriptional regulatory protein YebC"/>
    <property type="match status" value="1"/>
</dbReference>
<dbReference type="Gene3D" id="1.10.10.200">
    <property type="match status" value="1"/>
</dbReference>
<dbReference type="Gene3D" id="3.30.70.980">
    <property type="match status" value="2"/>
</dbReference>
<dbReference type="HAMAP" id="MF_00693">
    <property type="entry name" value="Transcrip_reg_TACO1"/>
    <property type="match status" value="1"/>
</dbReference>
<dbReference type="InterPro" id="IPR017856">
    <property type="entry name" value="Integrase-like_N"/>
</dbReference>
<dbReference type="InterPro" id="IPR048300">
    <property type="entry name" value="TACO1_YebC-like_2nd/3rd_dom"/>
</dbReference>
<dbReference type="InterPro" id="IPR049083">
    <property type="entry name" value="TACO1_YebC_N"/>
</dbReference>
<dbReference type="InterPro" id="IPR002876">
    <property type="entry name" value="Transcrip_reg_TACO1-like"/>
</dbReference>
<dbReference type="InterPro" id="IPR026564">
    <property type="entry name" value="Transcrip_reg_TACO1-like_dom3"/>
</dbReference>
<dbReference type="InterPro" id="IPR029072">
    <property type="entry name" value="YebC-like"/>
</dbReference>
<dbReference type="NCBIfam" id="NF001030">
    <property type="entry name" value="PRK00110.1"/>
    <property type="match status" value="1"/>
</dbReference>
<dbReference type="NCBIfam" id="NF009044">
    <property type="entry name" value="PRK12378.1"/>
    <property type="match status" value="1"/>
</dbReference>
<dbReference type="NCBIfam" id="TIGR01033">
    <property type="entry name" value="YebC/PmpR family DNA-binding transcriptional regulator"/>
    <property type="match status" value="1"/>
</dbReference>
<dbReference type="PANTHER" id="PTHR12532:SF6">
    <property type="entry name" value="TRANSCRIPTIONAL REGULATORY PROTEIN YEBC-RELATED"/>
    <property type="match status" value="1"/>
</dbReference>
<dbReference type="PANTHER" id="PTHR12532">
    <property type="entry name" value="TRANSLATIONAL ACTIVATOR OF CYTOCHROME C OXIDASE 1"/>
    <property type="match status" value="1"/>
</dbReference>
<dbReference type="Pfam" id="PF20772">
    <property type="entry name" value="TACO1_YebC_N"/>
    <property type="match status" value="1"/>
</dbReference>
<dbReference type="Pfam" id="PF01709">
    <property type="entry name" value="Transcrip_reg"/>
    <property type="match status" value="1"/>
</dbReference>
<dbReference type="SUPFAM" id="SSF75625">
    <property type="entry name" value="YebC-like"/>
    <property type="match status" value="1"/>
</dbReference>
<feature type="chain" id="PRO_1000072749" description="Probable transcriptional regulatory protein Asuc_1803">
    <location>
        <begin position="1"/>
        <end position="247"/>
    </location>
</feature>
<keyword id="KW-0963">Cytoplasm</keyword>
<keyword id="KW-0238">DNA-binding</keyword>
<keyword id="KW-1185">Reference proteome</keyword>
<keyword id="KW-0804">Transcription</keyword>
<keyword id="KW-0805">Transcription regulation</keyword>
<organism>
    <name type="scientific">Actinobacillus succinogenes (strain ATCC 55618 / DSM 22257 / CCUG 43843 / 130Z)</name>
    <dbReference type="NCBI Taxonomy" id="339671"/>
    <lineage>
        <taxon>Bacteria</taxon>
        <taxon>Pseudomonadati</taxon>
        <taxon>Pseudomonadota</taxon>
        <taxon>Gammaproteobacteria</taxon>
        <taxon>Pasteurellales</taxon>
        <taxon>Pasteurellaceae</taxon>
        <taxon>Actinobacillus</taxon>
    </lineage>
</organism>
<gene>
    <name type="ordered locus">Asuc_1803</name>
</gene>
<name>Y1803_ACTSZ</name>
<sequence>MAGHSKWANIKHRKAAQDAQRGKIFTKLIRELVTAAKIGGGDAGSNPRLRAAVDKALASNMTRDTINRAIDRGVGGGDDTNMETRVYEGYGPGGTAVMVECLSDNANRTISQVRPSFTKCGGNLGTEGSVGYLFNKKGLIIIDAGADEDALTEAAIEAGADDIQPQDDGSFEIYTAWEELGDVRDGIEKAGFKIAEAEVSMIPTTTVDLDAETAPKLLRLIDMLEDCDDVQNVYHNGEISDEVAALL</sequence>
<accession>A6VQA7</accession>
<proteinExistence type="inferred from homology"/>
<comment type="subcellular location">
    <subcellularLocation>
        <location evidence="1">Cytoplasm</location>
    </subcellularLocation>
</comment>
<comment type="similarity">
    <text evidence="1">Belongs to the TACO1 family.</text>
</comment>
<reference key="1">
    <citation type="journal article" date="2010" name="BMC Genomics">
        <title>A genomic perspective on the potential of Actinobacillus succinogenes for industrial succinate production.</title>
        <authorList>
            <person name="McKinlay J.B."/>
            <person name="Laivenieks M."/>
            <person name="Schindler B.D."/>
            <person name="McKinlay A.A."/>
            <person name="Siddaramappa S."/>
            <person name="Challacombe J.F."/>
            <person name="Lowry S.R."/>
            <person name="Clum A."/>
            <person name="Lapidus A.L."/>
            <person name="Burkhart K.B."/>
            <person name="Harkins V."/>
            <person name="Vieille C."/>
        </authorList>
    </citation>
    <scope>NUCLEOTIDE SEQUENCE [LARGE SCALE GENOMIC DNA]</scope>
    <source>
        <strain>ATCC 55618 / DSM 22257 / CCUG 43843 / 130Z</strain>
    </source>
</reference>
<protein>
    <recommendedName>
        <fullName evidence="1">Probable transcriptional regulatory protein Asuc_1803</fullName>
    </recommendedName>
</protein>